<protein>
    <recommendedName>
        <fullName>Zinc finger and SCAN domain-containing protein 22</fullName>
    </recommendedName>
    <alternativeName>
        <fullName>Krueppel-related zinc finger protein 2</fullName>
    </alternativeName>
    <alternativeName>
        <fullName>Protein HKR2</fullName>
    </alternativeName>
    <alternativeName>
        <fullName>Zinc finger protein 50</fullName>
    </alternativeName>
</protein>
<sequence length="491" mass="54561">MAIPKHSLSPVPWEEDSFLQVKVEEEEEASLSQGGESSHDHIAHSEAARLRFRHFRYEEASGPHEALAHLRALCCQWLQPEAHSKEQILELLVLEQFLGALPPEIQAWVGAQSPKSGEEAAVLVEDLTQVLDKRGWDPGAEPTEASCKQSDLGESEPSNVTETLMGGVSLGPAFVKACEPEGSSERSGLSGEIWTKSVTQQIHFKKTSGPYKDVPTDQRGRESGASRNSSSAWPNLTSQEKPPSEDKFDLVDAYGTEPPYTYSGKRSSKCRECRKMFQSASALEAHQKTHSRKTPYACSECGKAFSRSTHLAQHQVVHTGAKPHECKECGKAFSRVTHLTQHQRIHTGEKPYKCGECGKTFSRSTHLTQHQRVHTGERPYECDACGKAFSQSTHLTQHQRIHTGEKPYKCDACGRAFSDCSALIRHLRIHSGEKPYQCKVCPKAFAQSSSLIEHQRIHTGEKPYKCSDCGKAFSRSSALMVHLRIHITVLQ</sequence>
<proteinExistence type="evidence at protein level"/>
<name>ZSC22_HUMAN</name>
<gene>
    <name type="primary">ZSCAN22</name>
    <name type="synonym">HKR2</name>
    <name type="synonym">ZNF50</name>
</gene>
<dbReference type="EMBL" id="AK128716">
    <property type="protein sequence ID" value="BAC87588.1"/>
    <property type="molecule type" value="mRNA"/>
</dbReference>
<dbReference type="EMBL" id="BX537741">
    <property type="protein sequence ID" value="CAD97822.1"/>
    <property type="molecule type" value="mRNA"/>
</dbReference>
<dbReference type="EMBL" id="BC101630">
    <property type="protein sequence ID" value="AAI01631.1"/>
    <property type="molecule type" value="mRNA"/>
</dbReference>
<dbReference type="EMBL" id="BC112277">
    <property type="protein sequence ID" value="AAI12278.1"/>
    <property type="molecule type" value="mRNA"/>
</dbReference>
<dbReference type="EMBL" id="M88360">
    <property type="protein sequence ID" value="AAA61318.1"/>
    <property type="molecule type" value="Genomic_DNA"/>
</dbReference>
<dbReference type="CCDS" id="CCDS12975.1"/>
<dbReference type="PIR" id="D31201">
    <property type="entry name" value="D31201"/>
</dbReference>
<dbReference type="PIR" id="D43284">
    <property type="entry name" value="D43284"/>
</dbReference>
<dbReference type="RefSeq" id="NP_001308045.1">
    <property type="nucleotide sequence ID" value="NM_001321116.2"/>
</dbReference>
<dbReference type="RefSeq" id="NP_001308046.1">
    <property type="nucleotide sequence ID" value="NM_001321117.1"/>
</dbReference>
<dbReference type="RefSeq" id="NP_862829.1">
    <property type="nucleotide sequence ID" value="NM_181846.3"/>
</dbReference>
<dbReference type="RefSeq" id="XP_006723255.1">
    <property type="nucleotide sequence ID" value="XM_006723192.4"/>
</dbReference>
<dbReference type="RefSeq" id="XP_011525219.1">
    <property type="nucleotide sequence ID" value="XM_011526917.3"/>
</dbReference>
<dbReference type="RefSeq" id="XP_054176825.1">
    <property type="nucleotide sequence ID" value="XM_054320850.1"/>
</dbReference>
<dbReference type="RefSeq" id="XP_054176826.1">
    <property type="nucleotide sequence ID" value="XM_054320851.1"/>
</dbReference>
<dbReference type="SMR" id="P10073"/>
<dbReference type="BioGRID" id="131214">
    <property type="interactions" value="38"/>
</dbReference>
<dbReference type="FunCoup" id="P10073">
    <property type="interactions" value="229"/>
</dbReference>
<dbReference type="IntAct" id="P10073">
    <property type="interactions" value="41"/>
</dbReference>
<dbReference type="STRING" id="9606.ENSP00000332433"/>
<dbReference type="GlyGen" id="P10073">
    <property type="glycosylation" value="1 site"/>
</dbReference>
<dbReference type="iPTMnet" id="P10073"/>
<dbReference type="PhosphoSitePlus" id="P10073"/>
<dbReference type="BioMuta" id="ZSCAN22"/>
<dbReference type="DMDM" id="134047986"/>
<dbReference type="jPOST" id="P10073"/>
<dbReference type="MassIVE" id="P10073"/>
<dbReference type="PaxDb" id="9606-ENSP00000332433"/>
<dbReference type="PeptideAtlas" id="P10073"/>
<dbReference type="ProteomicsDB" id="52560"/>
<dbReference type="ABCD" id="P10073">
    <property type="antibodies" value="5 sequenced antibodies"/>
</dbReference>
<dbReference type="Antibodypedia" id="1829">
    <property type="antibodies" value="170 antibodies from 25 providers"/>
</dbReference>
<dbReference type="DNASU" id="342945"/>
<dbReference type="Ensembl" id="ENST00000329665.5">
    <property type="protein sequence ID" value="ENSP00000332433.3"/>
    <property type="gene ID" value="ENSG00000182318.7"/>
</dbReference>
<dbReference type="Ensembl" id="ENST00000850584.1">
    <property type="protein sequence ID" value="ENSP00000520871.1"/>
    <property type="gene ID" value="ENSG00000182318.7"/>
</dbReference>
<dbReference type="GeneID" id="342945"/>
<dbReference type="KEGG" id="hsa:342945"/>
<dbReference type="MANE-Select" id="ENST00000329665.5">
    <property type="protein sequence ID" value="ENSP00000332433.3"/>
    <property type="RefSeq nucleotide sequence ID" value="NM_181846.3"/>
    <property type="RefSeq protein sequence ID" value="NP_862829.1"/>
</dbReference>
<dbReference type="UCSC" id="uc002qsc.3">
    <property type="organism name" value="human"/>
</dbReference>
<dbReference type="AGR" id="HGNC:4929"/>
<dbReference type="CTD" id="342945"/>
<dbReference type="GeneCards" id="ZSCAN22"/>
<dbReference type="HGNC" id="HGNC:4929">
    <property type="gene designation" value="ZSCAN22"/>
</dbReference>
<dbReference type="HPA" id="ENSG00000182318">
    <property type="expression patterns" value="Low tissue specificity"/>
</dbReference>
<dbReference type="MIM" id="165260">
    <property type="type" value="gene"/>
</dbReference>
<dbReference type="neXtProt" id="NX_P10073"/>
<dbReference type="OpenTargets" id="ENSG00000182318"/>
<dbReference type="PharmGKB" id="PA29307"/>
<dbReference type="VEuPathDB" id="HostDB:ENSG00000182318"/>
<dbReference type="eggNOG" id="KOG1721">
    <property type="taxonomic scope" value="Eukaryota"/>
</dbReference>
<dbReference type="GeneTree" id="ENSGT00940000163014"/>
<dbReference type="HOGENOM" id="CLU_002678_49_8_1"/>
<dbReference type="InParanoid" id="P10073"/>
<dbReference type="OMA" id="PPYTYSG"/>
<dbReference type="OrthoDB" id="3437960at2759"/>
<dbReference type="PAN-GO" id="P10073">
    <property type="GO annotations" value="3 GO annotations based on evolutionary models"/>
</dbReference>
<dbReference type="PhylomeDB" id="P10073"/>
<dbReference type="TreeFam" id="TF337913"/>
<dbReference type="PathwayCommons" id="P10073"/>
<dbReference type="SignaLink" id="P10073"/>
<dbReference type="BioGRID-ORCS" id="342945">
    <property type="hits" value="11 hits in 1177 CRISPR screens"/>
</dbReference>
<dbReference type="ChiTaRS" id="ZSCAN22">
    <property type="organism name" value="human"/>
</dbReference>
<dbReference type="GenomeRNAi" id="342945"/>
<dbReference type="Pharos" id="P10073">
    <property type="development level" value="Tdark"/>
</dbReference>
<dbReference type="PRO" id="PR:P10073"/>
<dbReference type="Proteomes" id="UP000005640">
    <property type="component" value="Chromosome 19"/>
</dbReference>
<dbReference type="RNAct" id="P10073">
    <property type="molecule type" value="protein"/>
</dbReference>
<dbReference type="Bgee" id="ENSG00000182318">
    <property type="expression patterns" value="Expressed in primordial germ cell in gonad and 113 other cell types or tissues"/>
</dbReference>
<dbReference type="GO" id="GO:0005634">
    <property type="term" value="C:nucleus"/>
    <property type="evidence" value="ECO:0007669"/>
    <property type="project" value="UniProtKB-SubCell"/>
</dbReference>
<dbReference type="GO" id="GO:0000981">
    <property type="term" value="F:DNA-binding transcription factor activity, RNA polymerase II-specific"/>
    <property type="evidence" value="ECO:0000318"/>
    <property type="project" value="GO_Central"/>
</dbReference>
<dbReference type="GO" id="GO:0000978">
    <property type="term" value="F:RNA polymerase II cis-regulatory region sequence-specific DNA binding"/>
    <property type="evidence" value="ECO:0000318"/>
    <property type="project" value="GO_Central"/>
</dbReference>
<dbReference type="GO" id="GO:0008270">
    <property type="term" value="F:zinc ion binding"/>
    <property type="evidence" value="ECO:0007669"/>
    <property type="project" value="UniProtKB-KW"/>
</dbReference>
<dbReference type="GO" id="GO:0006357">
    <property type="term" value="P:regulation of transcription by RNA polymerase II"/>
    <property type="evidence" value="ECO:0000318"/>
    <property type="project" value="GO_Central"/>
</dbReference>
<dbReference type="CDD" id="cd07936">
    <property type="entry name" value="SCAN"/>
    <property type="match status" value="1"/>
</dbReference>
<dbReference type="FunFam" id="3.30.160.60:FF:002141">
    <property type="entry name" value="Zinc finger and SCAN domain-containing protein 22"/>
    <property type="match status" value="1"/>
</dbReference>
<dbReference type="FunFam" id="1.10.4020.10:FF:000001">
    <property type="entry name" value="zinc finger protein 263 isoform X1"/>
    <property type="match status" value="1"/>
</dbReference>
<dbReference type="FunFam" id="3.30.160.60:FF:001498">
    <property type="entry name" value="Zinc finger protein 404"/>
    <property type="match status" value="2"/>
</dbReference>
<dbReference type="FunFam" id="3.30.160.60:FF:001882">
    <property type="entry name" value="Zinc finger protein 473"/>
    <property type="match status" value="1"/>
</dbReference>
<dbReference type="FunFam" id="3.30.160.60:FF:002090">
    <property type="entry name" value="Zinc finger protein 473"/>
    <property type="match status" value="1"/>
</dbReference>
<dbReference type="FunFam" id="3.30.160.60:FF:000737">
    <property type="entry name" value="Zinc finger protein 565"/>
    <property type="match status" value="1"/>
</dbReference>
<dbReference type="FunFam" id="3.30.160.60:FF:000229">
    <property type="entry name" value="Zinc finger protein 90 homolog"/>
    <property type="match status" value="1"/>
</dbReference>
<dbReference type="Gene3D" id="3.30.160.60">
    <property type="entry name" value="Classic Zinc Finger"/>
    <property type="match status" value="8"/>
</dbReference>
<dbReference type="Gene3D" id="1.10.4020.10">
    <property type="entry name" value="DNA breaking-rejoining enzymes"/>
    <property type="match status" value="1"/>
</dbReference>
<dbReference type="InterPro" id="IPR003309">
    <property type="entry name" value="SCAN_dom"/>
</dbReference>
<dbReference type="InterPro" id="IPR038269">
    <property type="entry name" value="SCAN_sf"/>
</dbReference>
<dbReference type="InterPro" id="IPR036236">
    <property type="entry name" value="Znf_C2H2_sf"/>
</dbReference>
<dbReference type="InterPro" id="IPR013087">
    <property type="entry name" value="Znf_C2H2_type"/>
</dbReference>
<dbReference type="PANTHER" id="PTHR24394">
    <property type="entry name" value="ZINC FINGER PROTEIN"/>
    <property type="match status" value="1"/>
</dbReference>
<dbReference type="PANTHER" id="PTHR24394:SF48">
    <property type="entry name" value="ZINC FINGER PROTEIN 771"/>
    <property type="match status" value="1"/>
</dbReference>
<dbReference type="Pfam" id="PF02023">
    <property type="entry name" value="SCAN"/>
    <property type="match status" value="1"/>
</dbReference>
<dbReference type="Pfam" id="PF00096">
    <property type="entry name" value="zf-C2H2"/>
    <property type="match status" value="8"/>
</dbReference>
<dbReference type="SMART" id="SM00431">
    <property type="entry name" value="SCAN"/>
    <property type="match status" value="1"/>
</dbReference>
<dbReference type="SMART" id="SM00355">
    <property type="entry name" value="ZnF_C2H2"/>
    <property type="match status" value="8"/>
</dbReference>
<dbReference type="SUPFAM" id="SSF57667">
    <property type="entry name" value="beta-beta-alpha zinc fingers"/>
    <property type="match status" value="4"/>
</dbReference>
<dbReference type="SUPFAM" id="SSF47353">
    <property type="entry name" value="Retrovirus capsid dimerization domain-like"/>
    <property type="match status" value="1"/>
</dbReference>
<dbReference type="PROSITE" id="PS50804">
    <property type="entry name" value="SCAN_BOX"/>
    <property type="match status" value="1"/>
</dbReference>
<dbReference type="PROSITE" id="PS00028">
    <property type="entry name" value="ZINC_FINGER_C2H2_1"/>
    <property type="match status" value="8"/>
</dbReference>
<dbReference type="PROSITE" id="PS50157">
    <property type="entry name" value="ZINC_FINGER_C2H2_2"/>
    <property type="match status" value="8"/>
</dbReference>
<organism>
    <name type="scientific">Homo sapiens</name>
    <name type="common">Human</name>
    <dbReference type="NCBI Taxonomy" id="9606"/>
    <lineage>
        <taxon>Eukaryota</taxon>
        <taxon>Metazoa</taxon>
        <taxon>Chordata</taxon>
        <taxon>Craniata</taxon>
        <taxon>Vertebrata</taxon>
        <taxon>Euteleostomi</taxon>
        <taxon>Mammalia</taxon>
        <taxon>Eutheria</taxon>
        <taxon>Euarchontoglires</taxon>
        <taxon>Primates</taxon>
        <taxon>Haplorrhini</taxon>
        <taxon>Catarrhini</taxon>
        <taxon>Hominidae</taxon>
        <taxon>Homo</taxon>
    </lineage>
</organism>
<keyword id="KW-0238">DNA-binding</keyword>
<keyword id="KW-1017">Isopeptide bond</keyword>
<keyword id="KW-0479">Metal-binding</keyword>
<keyword id="KW-0539">Nucleus</keyword>
<keyword id="KW-0597">Phosphoprotein</keyword>
<keyword id="KW-1267">Proteomics identification</keyword>
<keyword id="KW-1185">Reference proteome</keyword>
<keyword id="KW-0677">Repeat</keyword>
<keyword id="KW-0804">Transcription</keyword>
<keyword id="KW-0805">Transcription regulation</keyword>
<keyword id="KW-0832">Ubl conjugation</keyword>
<keyword id="KW-0862">Zinc</keyword>
<keyword id="KW-0863">Zinc-finger</keyword>
<comment type="function">
    <text>May be involved in transcriptional regulation.</text>
</comment>
<comment type="interaction">
    <interactant intactId="EBI-10178224">
        <id>P10073</id>
    </interactant>
    <interactant intactId="EBI-358049">
        <id>Q13895</id>
        <label>BYSL</label>
    </interactant>
    <organismsDiffer>false</organismsDiffer>
    <experiments>3</experiments>
</comment>
<comment type="interaction">
    <interactant intactId="EBI-10178224">
        <id>P10073</id>
    </interactant>
    <interactant intactId="EBI-11063830">
        <id>Q86X02</id>
        <label>CDR2L</label>
    </interactant>
    <organismsDiffer>false</organismsDiffer>
    <experiments>3</experiments>
</comment>
<comment type="interaction">
    <interactant intactId="EBI-10178224">
        <id>P10073</id>
    </interactant>
    <interactant intactId="EBI-10976677">
        <id>G5E9A7</id>
        <label>DMWD</label>
    </interactant>
    <organismsDiffer>false</organismsDiffer>
    <experiments>3</experiments>
</comment>
<comment type="interaction">
    <interactant intactId="EBI-10178224">
        <id>P10073</id>
    </interactant>
    <interactant intactId="EBI-750300">
        <id>Q01658</id>
        <label>DR1</label>
    </interactant>
    <organismsDiffer>false</organismsDiffer>
    <experiments>3</experiments>
</comment>
<comment type="interaction">
    <interactant intactId="EBI-10178224">
        <id>P10073</id>
    </interactant>
    <interactant intactId="EBI-739789">
        <id>Q92997</id>
        <label>DVL3</label>
    </interactant>
    <organismsDiffer>false</organismsDiffer>
    <experiments>3</experiments>
</comment>
<comment type="interaction">
    <interactant intactId="EBI-10178224">
        <id>P10073</id>
    </interactant>
    <interactant intactId="EBI-744302">
        <id>P14136</id>
        <label>GFAP</label>
    </interactant>
    <organismsDiffer>false</organismsDiffer>
    <experiments>3</experiments>
</comment>
<comment type="interaction">
    <interactant intactId="EBI-10178224">
        <id>P10073</id>
    </interactant>
    <interactant intactId="EBI-389564">
        <id>Q00403</id>
        <label>GTF2B</label>
    </interactant>
    <organismsDiffer>false</organismsDiffer>
    <experiments>3</experiments>
</comment>
<comment type="interaction">
    <interactant intactId="EBI-10178224">
        <id>P10073</id>
    </interactant>
    <interactant intactId="EBI-1054873">
        <id>Q9Y5Q9</id>
        <label>GTF3C3</label>
    </interactant>
    <organismsDiffer>false</organismsDiffer>
    <experiments>3</experiments>
</comment>
<comment type="interaction">
    <interactant intactId="EBI-10178224">
        <id>P10073</id>
    </interactant>
    <interactant intactId="EBI-10239046">
        <id>Q17RG1</id>
        <label>KCTD19</label>
    </interactant>
    <organismsDiffer>false</organismsDiffer>
    <experiments>3</experiments>
</comment>
<comment type="interaction">
    <interactant intactId="EBI-10178224">
        <id>P10073</id>
    </interactant>
    <interactant intactId="EBI-351935">
        <id>P02545</id>
        <label>LMNA</label>
    </interactant>
    <organismsDiffer>false</organismsDiffer>
    <experiments>3</experiments>
</comment>
<comment type="interaction">
    <interactant intactId="EBI-10178224">
        <id>P10073</id>
    </interactant>
    <interactant intactId="EBI-713665">
        <id>P19404</id>
        <label>NDUFV2</label>
    </interactant>
    <organismsDiffer>false</organismsDiffer>
    <experiments>3</experiments>
</comment>
<comment type="interaction">
    <interactant intactId="EBI-10178224">
        <id>P10073</id>
    </interactant>
    <interactant intactId="EBI-10977819">
        <id>Q0ZGT2-4</id>
        <label>NEXN</label>
    </interactant>
    <organismsDiffer>false</organismsDiffer>
    <experiments>3</experiments>
</comment>
<comment type="interaction">
    <interactant intactId="EBI-10178224">
        <id>P10073</id>
    </interactant>
    <interactant intactId="EBI-10290053">
        <id>Q96JS3</id>
        <label>PGBD1</label>
    </interactant>
    <organismsDiffer>false</organismsDiffer>
    <experiments>9</experiments>
</comment>
<comment type="interaction">
    <interactant intactId="EBI-10178224">
        <id>P10073</id>
    </interactant>
    <interactant intactId="EBI-1567797">
        <id>Q8WWY3</id>
        <label>PRPF31</label>
    </interactant>
    <organismsDiffer>false</organismsDiffer>
    <experiments>3</experiments>
</comment>
<comment type="interaction">
    <interactant intactId="EBI-10178224">
        <id>P10073</id>
    </interactant>
    <interactant intactId="EBI-745846">
        <id>P57086</id>
        <label>SCAND1</label>
    </interactant>
    <organismsDiffer>false</organismsDiffer>
    <experiments>7</experiments>
</comment>
<comment type="interaction">
    <interactant intactId="EBI-10178224">
        <id>P10073</id>
    </interactant>
    <interactant intactId="EBI-2822051">
        <id>Q14140</id>
        <label>SERTAD2</label>
    </interactant>
    <organismsDiffer>false</organismsDiffer>
    <experiments>3</experiments>
</comment>
<comment type="interaction">
    <interactant intactId="EBI-10178224">
        <id>P10073</id>
    </interactant>
    <interactant intactId="EBI-5235340">
        <id>Q7Z699</id>
        <label>SPRED1</label>
    </interactant>
    <organismsDiffer>false</organismsDiffer>
    <experiments>3</experiments>
</comment>
<comment type="interaction">
    <interactant intactId="EBI-10178224">
        <id>P10073</id>
    </interactant>
    <interactant intactId="EBI-740492">
        <id>Q9UKI8</id>
        <label>TLK1</label>
    </interactant>
    <organismsDiffer>false</organismsDiffer>
    <experiments>3</experiments>
</comment>
<comment type="interaction">
    <interactant intactId="EBI-10178224">
        <id>P10073</id>
    </interactant>
    <interactant intactId="EBI-10183064">
        <id>Q8N5A5-2</id>
        <label>ZGPAT</label>
    </interactant>
    <organismsDiffer>false</organismsDiffer>
    <experiments>3</experiments>
</comment>
<comment type="interaction">
    <interactant intactId="EBI-10178224">
        <id>P10073</id>
    </interactant>
    <interactant intactId="EBI-16431094">
        <id>A0A0S2Z6X0</id>
        <label>ZKSCAN4</label>
    </interactant>
    <organismsDiffer>false</organismsDiffer>
    <experiments>3</experiments>
</comment>
<comment type="interaction">
    <interactant intactId="EBI-10178224">
        <id>P10073</id>
    </interactant>
    <interactant intactId="EBI-2818641">
        <id>Q969J2</id>
        <label>ZKSCAN4</label>
    </interactant>
    <organismsDiffer>false</organismsDiffer>
    <experiments>3</experiments>
</comment>
<comment type="interaction">
    <interactant intactId="EBI-10178224">
        <id>P10073</id>
    </interactant>
    <interactant intactId="EBI-10698225">
        <id>Q9P0L1-2</id>
        <label>ZKSCAN7</label>
    </interactant>
    <organismsDiffer>false</organismsDiffer>
    <experiments>3</experiments>
</comment>
<comment type="interaction">
    <interactant intactId="EBI-10178224">
        <id>P10073</id>
    </interactant>
    <interactant intactId="EBI-11158827">
        <id>Q15697-2</id>
        <label>ZNF174</label>
    </interactant>
    <organismsDiffer>false</organismsDiffer>
    <experiments>3</experiments>
</comment>
<comment type="interaction">
    <interactant intactId="EBI-10178224">
        <id>P10073</id>
    </interactant>
    <interactant intactId="EBI-707773">
        <id>P17028</id>
        <label>ZNF24</label>
    </interactant>
    <organismsDiffer>false</organismsDiffer>
    <experiments>6</experiments>
</comment>
<comment type="interaction">
    <interactant intactId="EBI-10178224">
        <id>P10073</id>
    </interactant>
    <interactant intactId="EBI-744493">
        <id>O14978</id>
        <label>ZNF263</label>
    </interactant>
    <organismsDiffer>false</organismsDiffer>
    <experiments>3</experiments>
</comment>
<comment type="interaction">
    <interactant intactId="EBI-10178224">
        <id>P10073</id>
    </interactant>
    <interactant intactId="EBI-11524467">
        <id>Q8NF99-2</id>
        <label>ZNF397</label>
    </interactant>
    <organismsDiffer>false</organismsDiffer>
    <experiments>3</experiments>
</comment>
<comment type="interaction">
    <interactant intactId="EBI-10178224">
        <id>P10073</id>
    </interactant>
    <interactant intactId="EBI-12010736">
        <id>Q8N0Y2-2</id>
        <label>ZNF444</label>
    </interactant>
    <organismsDiffer>false</organismsDiffer>
    <experiments>3</experiments>
</comment>
<comment type="interaction">
    <interactant intactId="EBI-10178224">
        <id>P10073</id>
    </interactant>
    <interactant intactId="EBI-740232">
        <id>Q9NWS9-2</id>
        <label>ZNF446</label>
    </interactant>
    <organismsDiffer>false</organismsDiffer>
    <experiments>8</experiments>
</comment>
<comment type="interaction">
    <interactant intactId="EBI-10178224">
        <id>P10073</id>
    </interactant>
    <interactant intactId="EBI-10215956">
        <id>Q6P9G9</id>
        <label>ZNF449</label>
    </interactant>
    <organismsDiffer>false</organismsDiffer>
    <experiments>3</experiments>
</comment>
<comment type="interaction">
    <interactant intactId="EBI-10178224">
        <id>P10073</id>
    </interactant>
    <interactant intactId="EBI-10196963">
        <id>Q6P088</id>
        <label>ZNF483</label>
    </interactant>
    <organismsDiffer>false</organismsDiffer>
    <experiments>3</experiments>
</comment>
<comment type="interaction">
    <interactant intactId="EBI-10178224">
        <id>P10073</id>
    </interactant>
    <interactant intactId="EBI-743906">
        <id>Q96IT1</id>
        <label>ZNF496</label>
    </interactant>
    <organismsDiffer>false</organismsDiffer>
    <experiments>7</experiments>
</comment>
<comment type="interaction">
    <interactant intactId="EBI-10178224">
        <id>P10073</id>
    </interactant>
    <interactant intactId="EBI-12021938">
        <id>Q8NBB4-2</id>
        <label>ZSCAN1</label>
    </interactant>
    <organismsDiffer>false</organismsDiffer>
    <experiments>3</experiments>
</comment>
<comment type="interaction">
    <interactant intactId="EBI-10178224">
        <id>P10073</id>
    </interactant>
    <interactant intactId="EBI-723596">
        <id>Q9H4T2</id>
        <label>ZSCAN16</label>
    </interactant>
    <organismsDiffer>false</organismsDiffer>
    <experiments>6</experiments>
</comment>
<comment type="interaction">
    <interactant intactId="EBI-10178224">
        <id>P10073</id>
    </interactant>
    <interactant intactId="EBI-3919096">
        <id>Q8TBC5</id>
        <label>ZSCAN18</label>
    </interactant>
    <organismsDiffer>false</organismsDiffer>
    <experiments>3</experiments>
</comment>
<comment type="interaction">
    <interactant intactId="EBI-10178224">
        <id>P10073</id>
    </interactant>
    <interactant intactId="EBI-10281938">
        <id>Q9Y5A6</id>
        <label>ZSCAN21</label>
    </interactant>
    <organismsDiffer>false</organismsDiffer>
    <experiments>3</experiments>
</comment>
<comment type="interaction">
    <interactant intactId="EBI-10178224">
        <id>P10073</id>
    </interactant>
    <interactant intactId="EBI-5667532">
        <id>Q3MJ62</id>
        <label>ZSCAN23</label>
    </interactant>
    <organismsDiffer>false</organismsDiffer>
    <experiments>3</experiments>
</comment>
<comment type="interaction">
    <interactant intactId="EBI-10178224">
        <id>P10073</id>
    </interactant>
    <interactant intactId="EBI-14650477">
        <id>Q6NSZ9-2</id>
        <label>ZSCAN25</label>
    </interactant>
    <organismsDiffer>false</organismsDiffer>
    <experiments>3</experiments>
</comment>
<comment type="interaction">
    <interactant intactId="EBI-10178224">
        <id>P10073</id>
    </interactant>
    <interactant intactId="EBI-739949">
        <id>Q9NX65</id>
        <label>ZSCAN32</label>
    </interactant>
    <organismsDiffer>false</organismsDiffer>
    <experiments>8</experiments>
</comment>
<comment type="interaction">
    <interactant intactId="EBI-10178224">
        <id>P10073</id>
    </interactant>
    <interactant intactId="EBI-751531">
        <id>O15535</id>
        <label>ZSCAN9</label>
    </interactant>
    <organismsDiffer>false</organismsDiffer>
    <experiments>3</experiments>
</comment>
<comment type="subcellular location">
    <subcellularLocation>
        <location evidence="2">Nucleus</location>
    </subcellularLocation>
</comment>
<comment type="similarity">
    <text evidence="4">Belongs to the krueppel C2H2-type zinc-finger protein family.</text>
</comment>
<evidence type="ECO:0000255" key="1">
    <source>
        <dbReference type="PROSITE-ProRule" id="PRU00042"/>
    </source>
</evidence>
<evidence type="ECO:0000255" key="2">
    <source>
        <dbReference type="PROSITE-ProRule" id="PRU00187"/>
    </source>
</evidence>
<evidence type="ECO:0000256" key="3">
    <source>
        <dbReference type="SAM" id="MobiDB-lite"/>
    </source>
</evidence>
<evidence type="ECO:0000305" key="4"/>
<evidence type="ECO:0007744" key="5">
    <source>
    </source>
</evidence>
<evidence type="ECO:0007744" key="6">
    <source>
    </source>
</evidence>
<feature type="chain" id="PRO_0000047271" description="Zinc finger and SCAN domain-containing protein 22">
    <location>
        <begin position="1"/>
        <end position="491"/>
    </location>
</feature>
<feature type="domain" description="SCAN box" evidence="2">
    <location>
        <begin position="49"/>
        <end position="131"/>
    </location>
</feature>
<feature type="zinc finger region" description="C2H2-type 1" evidence="1">
    <location>
        <begin position="268"/>
        <end position="290"/>
    </location>
</feature>
<feature type="zinc finger region" description="C2H2-type 2" evidence="1">
    <location>
        <begin position="296"/>
        <end position="318"/>
    </location>
</feature>
<feature type="zinc finger region" description="C2H2-type 3" evidence="1">
    <location>
        <begin position="324"/>
        <end position="346"/>
    </location>
</feature>
<feature type="zinc finger region" description="C2H2-type 4" evidence="1">
    <location>
        <begin position="352"/>
        <end position="374"/>
    </location>
</feature>
<feature type="zinc finger region" description="C2H2-type 5" evidence="1">
    <location>
        <begin position="380"/>
        <end position="402"/>
    </location>
</feature>
<feature type="zinc finger region" description="C2H2-type 6" evidence="1">
    <location>
        <begin position="408"/>
        <end position="430"/>
    </location>
</feature>
<feature type="zinc finger region" description="C2H2-type 7" evidence="1">
    <location>
        <begin position="436"/>
        <end position="458"/>
    </location>
</feature>
<feature type="zinc finger region" description="C2H2-type 8" evidence="1">
    <location>
        <begin position="464"/>
        <end position="486"/>
    </location>
</feature>
<feature type="region of interest" description="Disordered" evidence="3">
    <location>
        <begin position="134"/>
        <end position="161"/>
    </location>
</feature>
<feature type="region of interest" description="Disordered" evidence="3">
    <location>
        <begin position="204"/>
        <end position="249"/>
    </location>
</feature>
<feature type="compositionally biased region" description="Basic and acidic residues" evidence="3">
    <location>
        <begin position="214"/>
        <end position="224"/>
    </location>
</feature>
<feature type="compositionally biased region" description="Polar residues" evidence="3">
    <location>
        <begin position="225"/>
        <end position="241"/>
    </location>
</feature>
<feature type="modified residue" description="Phosphoserine" evidence="5">
    <location>
        <position position="9"/>
    </location>
</feature>
<feature type="cross-link" description="Glycyl lysine isopeptide (Lys-Gly) (interchain with G-Cter in SUMO2)" evidence="6">
    <location>
        <position position="443"/>
    </location>
</feature>
<reference key="1">
    <citation type="journal article" date="2004" name="Nat. Genet.">
        <title>Complete sequencing and characterization of 21,243 full-length human cDNAs.</title>
        <authorList>
            <person name="Ota T."/>
            <person name="Suzuki Y."/>
            <person name="Nishikawa T."/>
            <person name="Otsuki T."/>
            <person name="Sugiyama T."/>
            <person name="Irie R."/>
            <person name="Wakamatsu A."/>
            <person name="Hayashi K."/>
            <person name="Sato H."/>
            <person name="Nagai K."/>
            <person name="Kimura K."/>
            <person name="Makita H."/>
            <person name="Sekine M."/>
            <person name="Obayashi M."/>
            <person name="Nishi T."/>
            <person name="Shibahara T."/>
            <person name="Tanaka T."/>
            <person name="Ishii S."/>
            <person name="Yamamoto J."/>
            <person name="Saito K."/>
            <person name="Kawai Y."/>
            <person name="Isono Y."/>
            <person name="Nakamura Y."/>
            <person name="Nagahari K."/>
            <person name="Murakami K."/>
            <person name="Yasuda T."/>
            <person name="Iwayanagi T."/>
            <person name="Wagatsuma M."/>
            <person name="Shiratori A."/>
            <person name="Sudo H."/>
            <person name="Hosoiri T."/>
            <person name="Kaku Y."/>
            <person name="Kodaira H."/>
            <person name="Kondo H."/>
            <person name="Sugawara M."/>
            <person name="Takahashi M."/>
            <person name="Kanda K."/>
            <person name="Yokoi T."/>
            <person name="Furuya T."/>
            <person name="Kikkawa E."/>
            <person name="Omura Y."/>
            <person name="Abe K."/>
            <person name="Kamihara K."/>
            <person name="Katsuta N."/>
            <person name="Sato K."/>
            <person name="Tanikawa M."/>
            <person name="Yamazaki M."/>
            <person name="Ninomiya K."/>
            <person name="Ishibashi T."/>
            <person name="Yamashita H."/>
            <person name="Murakawa K."/>
            <person name="Fujimori K."/>
            <person name="Tanai H."/>
            <person name="Kimata M."/>
            <person name="Watanabe M."/>
            <person name="Hiraoka S."/>
            <person name="Chiba Y."/>
            <person name="Ishida S."/>
            <person name="Ono Y."/>
            <person name="Takiguchi S."/>
            <person name="Watanabe S."/>
            <person name="Yosida M."/>
            <person name="Hotuta T."/>
            <person name="Kusano J."/>
            <person name="Kanehori K."/>
            <person name="Takahashi-Fujii A."/>
            <person name="Hara H."/>
            <person name="Tanase T.-O."/>
            <person name="Nomura Y."/>
            <person name="Togiya S."/>
            <person name="Komai F."/>
            <person name="Hara R."/>
            <person name="Takeuchi K."/>
            <person name="Arita M."/>
            <person name="Imose N."/>
            <person name="Musashino K."/>
            <person name="Yuuki H."/>
            <person name="Oshima A."/>
            <person name="Sasaki N."/>
            <person name="Aotsuka S."/>
            <person name="Yoshikawa Y."/>
            <person name="Matsunawa H."/>
            <person name="Ichihara T."/>
            <person name="Shiohata N."/>
            <person name="Sano S."/>
            <person name="Moriya S."/>
            <person name="Momiyama H."/>
            <person name="Satoh N."/>
            <person name="Takami S."/>
            <person name="Terashima Y."/>
            <person name="Suzuki O."/>
            <person name="Nakagawa S."/>
            <person name="Senoh A."/>
            <person name="Mizoguchi H."/>
            <person name="Goto Y."/>
            <person name="Shimizu F."/>
            <person name="Wakebe H."/>
            <person name="Hishigaki H."/>
            <person name="Watanabe T."/>
            <person name="Sugiyama A."/>
            <person name="Takemoto M."/>
            <person name="Kawakami B."/>
            <person name="Yamazaki M."/>
            <person name="Watanabe K."/>
            <person name="Kumagai A."/>
            <person name="Itakura S."/>
            <person name="Fukuzumi Y."/>
            <person name="Fujimori Y."/>
            <person name="Komiyama M."/>
            <person name="Tashiro H."/>
            <person name="Tanigami A."/>
            <person name="Fujiwara T."/>
            <person name="Ono T."/>
            <person name="Yamada K."/>
            <person name="Fujii Y."/>
            <person name="Ozaki K."/>
            <person name="Hirao M."/>
            <person name="Ohmori Y."/>
            <person name="Kawabata A."/>
            <person name="Hikiji T."/>
            <person name="Kobatake N."/>
            <person name="Inagaki H."/>
            <person name="Ikema Y."/>
            <person name="Okamoto S."/>
            <person name="Okitani R."/>
            <person name="Kawakami T."/>
            <person name="Noguchi S."/>
            <person name="Itoh T."/>
            <person name="Shigeta K."/>
            <person name="Senba T."/>
            <person name="Matsumura K."/>
            <person name="Nakajima Y."/>
            <person name="Mizuno T."/>
            <person name="Morinaga M."/>
            <person name="Sasaki M."/>
            <person name="Togashi T."/>
            <person name="Oyama M."/>
            <person name="Hata H."/>
            <person name="Watanabe M."/>
            <person name="Komatsu T."/>
            <person name="Mizushima-Sugano J."/>
            <person name="Satoh T."/>
            <person name="Shirai Y."/>
            <person name="Takahashi Y."/>
            <person name="Nakagawa K."/>
            <person name="Okumura K."/>
            <person name="Nagase T."/>
            <person name="Nomura N."/>
            <person name="Kikuchi H."/>
            <person name="Masuho Y."/>
            <person name="Yamashita R."/>
            <person name="Nakai K."/>
            <person name="Yada T."/>
            <person name="Nakamura Y."/>
            <person name="Ohara O."/>
            <person name="Isogai T."/>
            <person name="Sugano S."/>
        </authorList>
    </citation>
    <scope>NUCLEOTIDE SEQUENCE [LARGE SCALE MRNA]</scope>
    <source>
        <tissue>Uterus</tissue>
    </source>
</reference>
<reference key="2">
    <citation type="journal article" date="2007" name="BMC Genomics">
        <title>The full-ORF clone resource of the German cDNA consortium.</title>
        <authorList>
            <person name="Bechtel S."/>
            <person name="Rosenfelder H."/>
            <person name="Duda A."/>
            <person name="Schmidt C.P."/>
            <person name="Ernst U."/>
            <person name="Wellenreuther R."/>
            <person name="Mehrle A."/>
            <person name="Schuster C."/>
            <person name="Bahr A."/>
            <person name="Bloecker H."/>
            <person name="Heubner D."/>
            <person name="Hoerlein A."/>
            <person name="Michel G."/>
            <person name="Wedler H."/>
            <person name="Koehrer K."/>
            <person name="Ottenwaelder B."/>
            <person name="Poustka A."/>
            <person name="Wiemann S."/>
            <person name="Schupp I."/>
        </authorList>
    </citation>
    <scope>NUCLEOTIDE SEQUENCE [LARGE SCALE MRNA]</scope>
    <source>
        <tissue>Fetal kidney</tissue>
    </source>
</reference>
<reference key="3">
    <citation type="journal article" date="2004" name="Genome Res.">
        <title>The status, quality, and expansion of the NIH full-length cDNA project: the Mammalian Gene Collection (MGC).</title>
        <authorList>
            <consortium name="The MGC Project Team"/>
        </authorList>
    </citation>
    <scope>NUCLEOTIDE SEQUENCE [LARGE SCALE MRNA]</scope>
</reference>
<reference key="4">
    <citation type="journal article" date="1992" name="Genomics">
        <title>Clustering of C2-H2 zinc finger motif sequences within telomeric and fragile site regions of human chromosomes.</title>
        <authorList>
            <person name="Lichter P."/>
            <person name="Bray P."/>
            <person name="Ried T."/>
            <person name="Dawid I.B."/>
            <person name="Ward D.C."/>
        </authorList>
    </citation>
    <scope>NUCLEOTIDE SEQUENCE [GENOMIC DNA] OF 370-457</scope>
    <source>
        <tissue>Placenta</tissue>
    </source>
</reference>
<reference key="5">
    <citation type="journal article" date="1988" name="Mol. Cell. Biol.">
        <title>The GLI-Kruppel family of human genes.</title>
        <authorList>
            <person name="Ruppert J.M."/>
            <person name="Kinzler K.W."/>
            <person name="Wong A.J."/>
            <person name="Bigner S.H."/>
            <person name="Kao F.T."/>
            <person name="Law M.L."/>
            <person name="Seuanez H.N."/>
            <person name="O'Brien S.J."/>
            <person name="Vogelstein B."/>
        </authorList>
    </citation>
    <scope>PARTIAL NUCLEOTIDE SEQUENCE [GENOMIC DNA]</scope>
</reference>
<reference key="6">
    <citation type="journal article" date="2013" name="J. Proteome Res.">
        <title>Toward a comprehensive characterization of a human cancer cell phosphoproteome.</title>
        <authorList>
            <person name="Zhou H."/>
            <person name="Di Palma S."/>
            <person name="Preisinger C."/>
            <person name="Peng M."/>
            <person name="Polat A.N."/>
            <person name="Heck A.J."/>
            <person name="Mohammed S."/>
        </authorList>
    </citation>
    <scope>PHOSPHORYLATION [LARGE SCALE ANALYSIS] AT SER-9</scope>
    <scope>IDENTIFICATION BY MASS SPECTROMETRY [LARGE SCALE ANALYSIS]</scope>
    <source>
        <tissue>Erythroleukemia</tissue>
    </source>
</reference>
<reference key="7">
    <citation type="journal article" date="2017" name="Nat. Struct. Mol. Biol.">
        <title>Site-specific mapping of the human SUMO proteome reveals co-modification with phosphorylation.</title>
        <authorList>
            <person name="Hendriks I.A."/>
            <person name="Lyon D."/>
            <person name="Young C."/>
            <person name="Jensen L.J."/>
            <person name="Vertegaal A.C."/>
            <person name="Nielsen M.L."/>
        </authorList>
    </citation>
    <scope>SUMOYLATION [LARGE SCALE ANALYSIS] AT LYS-443</scope>
    <scope>IDENTIFICATION BY MASS SPECTROMETRY [LARGE SCALE ANALYSIS]</scope>
</reference>
<accession>P10073</accession>
<accession>Q15922</accession>
<accession>Q7Z3L8</accession>